<comment type="function">
    <text evidence="1">Core subunit of the mitochondrial membrane respiratory chain NADH dehydrogenase (Complex I) that is believed to belong to the minimal assembly required for catalysis. Complex I functions in the transfer of electrons from NADH to the respiratory chain. The immediate electron acceptor for the enzyme is believed to be ubiquinone (By similarity).</text>
</comment>
<comment type="catalytic activity">
    <reaction>
        <text>a ubiquinone + NADH + 5 H(+)(in) = a ubiquinol + NAD(+) + 4 H(+)(out)</text>
        <dbReference type="Rhea" id="RHEA:29091"/>
        <dbReference type="Rhea" id="RHEA-COMP:9565"/>
        <dbReference type="Rhea" id="RHEA-COMP:9566"/>
        <dbReference type="ChEBI" id="CHEBI:15378"/>
        <dbReference type="ChEBI" id="CHEBI:16389"/>
        <dbReference type="ChEBI" id="CHEBI:17976"/>
        <dbReference type="ChEBI" id="CHEBI:57540"/>
        <dbReference type="ChEBI" id="CHEBI:57945"/>
        <dbReference type="EC" id="7.1.1.2"/>
    </reaction>
</comment>
<comment type="subcellular location">
    <subcellularLocation>
        <location>Mitochondrion inner membrane</location>
        <topology>Multi-pass membrane protein</topology>
    </subcellularLocation>
</comment>
<comment type="similarity">
    <text evidence="3">Belongs to the complex I subunit 2 family.</text>
</comment>
<reference key="1">
    <citation type="journal article" date="1986" name="Nucleic Acids Res.">
        <title>Nucleotide sequence of a protein coding region in Chlamydomonas reinhardtii mitochondrial DNA.</title>
        <authorList>
            <person name="Boer P.H."/>
            <person name="Gray M.W."/>
        </authorList>
    </citation>
    <scope>NUCLEOTIDE SEQUENCE [GENOMIC DNA]</scope>
    <source>
        <strain>CW15-2</strain>
    </source>
</reference>
<reference key="2">
    <citation type="submission" date="1995-01" db="EMBL/GenBank/DDBJ databases">
        <authorList>
            <person name="Gray M.W."/>
        </authorList>
    </citation>
    <scope>NUCLEOTIDE SEQUENCE [GENOMIC DNA]</scope>
    <source>
        <strain>cw15</strain>
    </source>
</reference>
<reference key="3">
    <citation type="journal article" date="1988" name="Nucleic Acids Res.">
        <title>Nucleotide sequence of Chlamydomonas reinhardtii mitochondrial genes coding for subunit 6 of NADH dehydrogenase and tRNATrp.</title>
        <authorList>
            <person name="Ma D.-P."/>
            <person name="Yang Y.-W."/>
            <person name="Hasnain S."/>
        </authorList>
    </citation>
    <scope>NUCLEOTIDE SEQUENCE [GENOMIC DNA] OF 305-382</scope>
    <source>
        <strain>cw15</strain>
    </source>
</reference>
<reference key="4">
    <citation type="journal article" date="1989" name="Nucleic Acids Res.">
        <title>Nucleotide sequence of a region encoding subunit 6 of NADH dehydrogenase (ND6) and tRNA(Trp) in Chlamydomonas reinhardtii mitochondrial DNA.</title>
        <authorList>
            <person name="Boer P.H."/>
            <person name="Gray M.W."/>
        </authorList>
    </citation>
    <scope>NUCLEOTIDE SEQUENCE [GENOMIC DNA] OF 366-382</scope>
    <source>
        <strain>cw15</strain>
    </source>
</reference>
<protein>
    <recommendedName>
        <fullName>NADH-ubiquinone oxidoreductase chain 2</fullName>
        <ecNumber>7.1.1.2</ecNumber>
    </recommendedName>
    <alternativeName>
        <fullName>NADH dehydrogenase subunit 2</fullName>
    </alternativeName>
</protein>
<name>NU2M_CHLRE</name>
<keyword id="KW-0002">3D-structure</keyword>
<keyword id="KW-0249">Electron transport</keyword>
<keyword id="KW-0472">Membrane</keyword>
<keyword id="KW-0496">Mitochondrion</keyword>
<keyword id="KW-0999">Mitochondrion inner membrane</keyword>
<keyword id="KW-0520">NAD</keyword>
<keyword id="KW-0679">Respiratory chain</keyword>
<keyword id="KW-1278">Translocase</keyword>
<keyword id="KW-0812">Transmembrane</keyword>
<keyword id="KW-1133">Transmembrane helix</keyword>
<keyword id="KW-0813">Transport</keyword>
<keyword id="KW-0830">Ubiquinone</keyword>
<accession>P08740</accession>
<accession>P11659</accession>
<gene>
    <name type="primary">ND2</name>
    <name type="synonym">NAD2</name>
</gene>
<feature type="chain" id="PRO_0000117570" description="NADH-ubiquinone oxidoreductase chain 2">
    <location>
        <begin position="1"/>
        <end position="382"/>
    </location>
</feature>
<feature type="transmembrane region" description="Helical" evidence="2">
    <location>
        <begin position="1"/>
        <end position="21"/>
    </location>
</feature>
<feature type="transmembrane region" description="Helical" evidence="2">
    <location>
        <begin position="33"/>
        <end position="53"/>
    </location>
</feature>
<feature type="transmembrane region" description="Helical" evidence="2">
    <location>
        <begin position="54"/>
        <end position="74"/>
    </location>
</feature>
<feature type="transmembrane region" description="Helical" evidence="2">
    <location>
        <begin position="88"/>
        <end position="108"/>
    </location>
</feature>
<feature type="transmembrane region" description="Helical" evidence="2">
    <location>
        <begin position="123"/>
        <end position="143"/>
    </location>
</feature>
<feature type="transmembrane region" description="Helical" evidence="2">
    <location>
        <begin position="158"/>
        <end position="178"/>
    </location>
</feature>
<feature type="transmembrane region" description="Helical" evidence="2">
    <location>
        <begin position="188"/>
        <end position="208"/>
    </location>
</feature>
<feature type="transmembrane region" description="Helical" evidence="2">
    <location>
        <begin position="212"/>
        <end position="232"/>
    </location>
</feature>
<feature type="transmembrane region" description="Helical" evidence="2">
    <location>
        <begin position="239"/>
        <end position="259"/>
    </location>
</feature>
<feature type="transmembrane region" description="Helical" evidence="2">
    <location>
        <begin position="260"/>
        <end position="280"/>
    </location>
</feature>
<feature type="transmembrane region" description="Helical" evidence="2">
    <location>
        <begin position="284"/>
        <end position="304"/>
    </location>
</feature>
<feature type="transmembrane region" description="Helical" evidence="2">
    <location>
        <begin position="305"/>
        <end position="325"/>
    </location>
</feature>
<feature type="sequence conflict" description="In Ref. 3." evidence="3" ref="3">
    <original>A</original>
    <variation>R</variation>
    <location>
        <position position="366"/>
    </location>
</feature>
<sequence>MIELDLCFGLLLLILFGLLSLRNGHVSLAHIRFICQCWLVMITPLEVQDFALCILTVVLLQSFHSFEALLFLLLAYIGQLYMMHSCNLVSFYVCLEAQTLCVVVLCGLLARGASTSFSVEAALKFLLLSAMVSGMALFWFSAMYQRTGSLDMVGQETFWILLVMLFKLGVAPMHMWSVDLYGSIPKSLLLYLSTAPKLSLFTFWASSWHHDFSVGVFILFSMFIGSIGAYGQPALRSLFAYSTINEIGLLLLAVETAGFHTLYQHLGIYIITQLLLWNLTDKRLFALCAVSLAGLPPFAGFFGKAWIFWHAMSVQAFSLLAAALFCTLLSLVYYLRVIRLFWTAPVHTAASFTGAPNQTTLTSACAVALAFAPVMLVKPFVI</sequence>
<dbReference type="EC" id="7.1.1.2"/>
<dbReference type="EMBL" id="X54860">
    <property type="protein sequence ID" value="CAA38643.1"/>
    <property type="molecule type" value="Genomic_DNA"/>
</dbReference>
<dbReference type="EMBL" id="U03843">
    <property type="protein sequence ID" value="AAB93444.1"/>
    <property type="molecule type" value="Genomic_DNA"/>
</dbReference>
<dbReference type="EMBL" id="X66484">
    <property type="protein sequence ID" value="CAA47115.1"/>
    <property type="molecule type" value="Genomic_DNA"/>
</dbReference>
<dbReference type="EMBL" id="X12939">
    <property type="status" value="NOT_ANNOTATED_CDS"/>
    <property type="molecule type" value="Genomic_DNA"/>
</dbReference>
<dbReference type="PIR" id="S37608">
    <property type="entry name" value="S37608"/>
</dbReference>
<dbReference type="RefSeq" id="NP_042568.1">
    <property type="nucleotide sequence ID" value="NC_001638.1"/>
</dbReference>
<dbReference type="PDB" id="9F5X">
    <property type="method" value="EM"/>
    <property type="resolution" value="2.82 A"/>
    <property type="chains" value="R=1-382"/>
</dbReference>
<dbReference type="PDB" id="9F5Y">
    <property type="method" value="EM"/>
    <property type="resolution" value="2.51 A"/>
    <property type="chains" value="R=1-382"/>
</dbReference>
<dbReference type="PDB" id="9F62">
    <property type="method" value="EM"/>
    <property type="resolution" value="5.44 A"/>
    <property type="chains" value="5R/R=1-382"/>
</dbReference>
<dbReference type="PDBsum" id="9F5X"/>
<dbReference type="PDBsum" id="9F5Y"/>
<dbReference type="PDBsum" id="9F62"/>
<dbReference type="EMDB" id="EMD-50202"/>
<dbReference type="EMDB" id="EMD-50203"/>
<dbReference type="EMDB" id="EMD-50210"/>
<dbReference type="SMR" id="P08740"/>
<dbReference type="TCDB" id="3.D.1.6.4">
    <property type="family name" value="the h+ or na+-translocating nadh dehydrogenase (ndh) family"/>
</dbReference>
<dbReference type="PaxDb" id="3055-AAB93444"/>
<dbReference type="GeneID" id="801491"/>
<dbReference type="KEGG" id="cre:ChrepMp05"/>
<dbReference type="eggNOG" id="KOG4668">
    <property type="taxonomic scope" value="Eukaryota"/>
</dbReference>
<dbReference type="HOGENOM" id="CLU_724351_0_0_1"/>
<dbReference type="BioCyc" id="CHLAMY:CHREPMP05-MONOMER"/>
<dbReference type="GO" id="GO:0005743">
    <property type="term" value="C:mitochondrial inner membrane"/>
    <property type="evidence" value="ECO:0007669"/>
    <property type="project" value="UniProtKB-SubCell"/>
</dbReference>
<dbReference type="GO" id="GO:0008137">
    <property type="term" value="F:NADH dehydrogenase (ubiquinone) activity"/>
    <property type="evidence" value="ECO:0007669"/>
    <property type="project" value="UniProtKB-EC"/>
</dbReference>
<dbReference type="InterPro" id="IPR001750">
    <property type="entry name" value="ND/Mrp_TM"/>
</dbReference>
<dbReference type="PANTHER" id="PTHR22773">
    <property type="entry name" value="NADH DEHYDROGENASE"/>
    <property type="match status" value="1"/>
</dbReference>
<dbReference type="Pfam" id="PF00361">
    <property type="entry name" value="Proton_antipo_M"/>
    <property type="match status" value="2"/>
</dbReference>
<evidence type="ECO:0000250" key="1"/>
<evidence type="ECO:0000255" key="2"/>
<evidence type="ECO:0000305" key="3"/>
<geneLocation type="mitochondrion"/>
<organism>
    <name type="scientific">Chlamydomonas reinhardtii</name>
    <name type="common">Chlamydomonas smithii</name>
    <dbReference type="NCBI Taxonomy" id="3055"/>
    <lineage>
        <taxon>Eukaryota</taxon>
        <taxon>Viridiplantae</taxon>
        <taxon>Chlorophyta</taxon>
        <taxon>core chlorophytes</taxon>
        <taxon>Chlorophyceae</taxon>
        <taxon>CS clade</taxon>
        <taxon>Chlamydomonadales</taxon>
        <taxon>Chlamydomonadaceae</taxon>
        <taxon>Chlamydomonas</taxon>
    </lineage>
</organism>
<proteinExistence type="evidence at protein level"/>